<proteinExistence type="inferred from homology"/>
<dbReference type="EC" id="3.5.1.9" evidence="1"/>
<dbReference type="EMBL" id="AE017355">
    <property type="protein sequence ID" value="AAT61841.1"/>
    <property type="molecule type" value="Genomic_DNA"/>
</dbReference>
<dbReference type="RefSeq" id="WP_000858066.1">
    <property type="nucleotide sequence ID" value="NC_005957.1"/>
</dbReference>
<dbReference type="RefSeq" id="YP_036848.1">
    <property type="nucleotide sequence ID" value="NC_005957.1"/>
</dbReference>
<dbReference type="SMR" id="Q6HHX8"/>
<dbReference type="KEGG" id="btk:BT9727_2522"/>
<dbReference type="PATRIC" id="fig|281309.8.peg.2670"/>
<dbReference type="HOGENOM" id="CLU_030671_3_1_9"/>
<dbReference type="UniPathway" id="UPA00333">
    <property type="reaction ID" value="UER00454"/>
</dbReference>
<dbReference type="Proteomes" id="UP000001301">
    <property type="component" value="Chromosome"/>
</dbReference>
<dbReference type="GO" id="GO:0004061">
    <property type="term" value="F:arylformamidase activity"/>
    <property type="evidence" value="ECO:0000250"/>
    <property type="project" value="UniProtKB"/>
</dbReference>
<dbReference type="GO" id="GO:0004328">
    <property type="term" value="F:formamidase activity"/>
    <property type="evidence" value="ECO:0007669"/>
    <property type="project" value="InterPro"/>
</dbReference>
<dbReference type="GO" id="GO:0008270">
    <property type="term" value="F:zinc ion binding"/>
    <property type="evidence" value="ECO:0007669"/>
    <property type="project" value="UniProtKB-UniRule"/>
</dbReference>
<dbReference type="GO" id="GO:0043420">
    <property type="term" value="P:anthranilate metabolic process"/>
    <property type="evidence" value="ECO:0000250"/>
    <property type="project" value="UniProtKB"/>
</dbReference>
<dbReference type="GO" id="GO:0019441">
    <property type="term" value="P:L-tryptophan catabolic process to kynurenine"/>
    <property type="evidence" value="ECO:0000250"/>
    <property type="project" value="UniProtKB"/>
</dbReference>
<dbReference type="FunFam" id="3.50.30.50:FF:000001">
    <property type="entry name" value="Kynurenine formamidase"/>
    <property type="match status" value="1"/>
</dbReference>
<dbReference type="Gene3D" id="3.50.30.50">
    <property type="entry name" value="Putative cyclase"/>
    <property type="match status" value="1"/>
</dbReference>
<dbReference type="HAMAP" id="MF_01969">
    <property type="entry name" value="KynB"/>
    <property type="match status" value="1"/>
</dbReference>
<dbReference type="InterPro" id="IPR007325">
    <property type="entry name" value="KFase/CYL"/>
</dbReference>
<dbReference type="InterPro" id="IPR037175">
    <property type="entry name" value="KFase_sf"/>
</dbReference>
<dbReference type="InterPro" id="IPR017484">
    <property type="entry name" value="Kynurenine_formamidase_bac"/>
</dbReference>
<dbReference type="NCBIfam" id="TIGR03035">
    <property type="entry name" value="trp_arylform"/>
    <property type="match status" value="1"/>
</dbReference>
<dbReference type="PANTHER" id="PTHR31118">
    <property type="entry name" value="CYCLASE-LIKE PROTEIN 2"/>
    <property type="match status" value="1"/>
</dbReference>
<dbReference type="PANTHER" id="PTHR31118:SF32">
    <property type="entry name" value="KYNURENINE FORMAMIDASE"/>
    <property type="match status" value="1"/>
</dbReference>
<dbReference type="Pfam" id="PF04199">
    <property type="entry name" value="Cyclase"/>
    <property type="match status" value="1"/>
</dbReference>
<dbReference type="SUPFAM" id="SSF102198">
    <property type="entry name" value="Putative cyclase"/>
    <property type="match status" value="1"/>
</dbReference>
<sequence length="209" mass="23104">MKTSEWIDISQPLNNDIATWPGDTPFSYEVSWSKEESGSVNVGKLTMSIHTGTHIDAPFHFDNNGKKVLDLDIQVYVGPTRIIDVSNLESIGKKELEKFHLEGVERLLLRTSSHGKANEFPDIIPHLRADIAPFLSEKGIRLIGVDVPSVDPLDDKELAAHHQLFKHGIHILENVVLDHVADGDYELIALPLALSDADGSPVRAVIKPI</sequence>
<accession>Q6HHX8</accession>
<comment type="function">
    <text evidence="1">Catalyzes the hydrolysis of N-formyl-L-kynurenine to L-kynurenine, the second step in the kynurenine pathway of tryptophan degradation.</text>
</comment>
<comment type="catalytic activity">
    <reaction evidence="1">
        <text>N-formyl-L-kynurenine + H2O = L-kynurenine + formate + H(+)</text>
        <dbReference type="Rhea" id="RHEA:13009"/>
        <dbReference type="ChEBI" id="CHEBI:15377"/>
        <dbReference type="ChEBI" id="CHEBI:15378"/>
        <dbReference type="ChEBI" id="CHEBI:15740"/>
        <dbReference type="ChEBI" id="CHEBI:57959"/>
        <dbReference type="ChEBI" id="CHEBI:58629"/>
        <dbReference type="EC" id="3.5.1.9"/>
    </reaction>
</comment>
<comment type="cofactor">
    <cofactor evidence="1">
        <name>Zn(2+)</name>
        <dbReference type="ChEBI" id="CHEBI:29105"/>
    </cofactor>
    <text evidence="1">Binds 2 zinc ions per subunit.</text>
</comment>
<comment type="pathway">
    <text evidence="1">Amino-acid degradation; L-tryptophan degradation via kynurenine pathway; L-kynurenine from L-tryptophan: step 2/2.</text>
</comment>
<comment type="subunit">
    <text evidence="1">Homodimer.</text>
</comment>
<comment type="similarity">
    <text evidence="1">Belongs to the Cyclase 1 superfamily. KynB family.</text>
</comment>
<protein>
    <recommendedName>
        <fullName evidence="1">Kynurenine formamidase</fullName>
        <shortName evidence="1">KFA</shortName>
        <shortName evidence="1">KFase</shortName>
        <ecNumber evidence="1">3.5.1.9</ecNumber>
    </recommendedName>
    <alternativeName>
        <fullName evidence="1">Arylformamidase</fullName>
    </alternativeName>
    <alternativeName>
        <fullName evidence="1">N-formylkynurenine formamidase</fullName>
        <shortName evidence="1">FKF</shortName>
    </alternativeName>
</protein>
<gene>
    <name evidence="1" type="primary">kynB</name>
    <name type="ordered locus">BT9727_2522</name>
</gene>
<keyword id="KW-0378">Hydrolase</keyword>
<keyword id="KW-0479">Metal-binding</keyword>
<keyword id="KW-0823">Tryptophan catabolism</keyword>
<keyword id="KW-0862">Zinc</keyword>
<feature type="chain" id="PRO_0000362093" description="Kynurenine formamidase">
    <location>
        <begin position="1"/>
        <end position="209"/>
    </location>
</feature>
<feature type="active site" description="Proton donor/acceptor" evidence="1">
    <location>
        <position position="60"/>
    </location>
</feature>
<feature type="binding site" evidence="1">
    <location>
        <position position="20"/>
    </location>
    <ligand>
        <name>substrate</name>
    </ligand>
</feature>
<feature type="binding site" evidence="1">
    <location>
        <position position="50"/>
    </location>
    <ligand>
        <name>Zn(2+)</name>
        <dbReference type="ChEBI" id="CHEBI:29105"/>
        <label>1</label>
    </ligand>
</feature>
<feature type="binding site" evidence="1">
    <location>
        <position position="54"/>
    </location>
    <ligand>
        <name>Zn(2+)</name>
        <dbReference type="ChEBI" id="CHEBI:29105"/>
        <label>1</label>
    </ligand>
</feature>
<feature type="binding site" evidence="1">
    <location>
        <position position="56"/>
    </location>
    <ligand>
        <name>Zn(2+)</name>
        <dbReference type="ChEBI" id="CHEBI:29105"/>
        <label>1</label>
    </ligand>
</feature>
<feature type="binding site" evidence="1">
    <location>
        <position position="56"/>
    </location>
    <ligand>
        <name>Zn(2+)</name>
        <dbReference type="ChEBI" id="CHEBI:29105"/>
        <label>2</label>
    </ligand>
</feature>
<feature type="binding site" evidence="1">
    <location>
        <position position="161"/>
    </location>
    <ligand>
        <name>Zn(2+)</name>
        <dbReference type="ChEBI" id="CHEBI:29105"/>
        <label>2</label>
    </ligand>
</feature>
<feature type="binding site" evidence="1">
    <location>
        <position position="173"/>
    </location>
    <ligand>
        <name>Zn(2+)</name>
        <dbReference type="ChEBI" id="CHEBI:29105"/>
        <label>1</label>
    </ligand>
</feature>
<feature type="binding site" evidence="1">
    <location>
        <position position="173"/>
    </location>
    <ligand>
        <name>Zn(2+)</name>
        <dbReference type="ChEBI" id="CHEBI:29105"/>
        <label>2</label>
    </ligand>
</feature>
<organism>
    <name type="scientific">Bacillus thuringiensis subsp. konkukian (strain 97-27)</name>
    <dbReference type="NCBI Taxonomy" id="281309"/>
    <lineage>
        <taxon>Bacteria</taxon>
        <taxon>Bacillati</taxon>
        <taxon>Bacillota</taxon>
        <taxon>Bacilli</taxon>
        <taxon>Bacillales</taxon>
        <taxon>Bacillaceae</taxon>
        <taxon>Bacillus</taxon>
        <taxon>Bacillus cereus group</taxon>
    </lineage>
</organism>
<evidence type="ECO:0000255" key="1">
    <source>
        <dbReference type="HAMAP-Rule" id="MF_01969"/>
    </source>
</evidence>
<name>KYNB_BACHK</name>
<reference key="1">
    <citation type="journal article" date="2006" name="J. Bacteriol.">
        <title>Pathogenomic sequence analysis of Bacillus cereus and Bacillus thuringiensis isolates closely related to Bacillus anthracis.</title>
        <authorList>
            <person name="Han C.S."/>
            <person name="Xie G."/>
            <person name="Challacombe J.F."/>
            <person name="Altherr M.R."/>
            <person name="Bhotika S.S."/>
            <person name="Bruce D."/>
            <person name="Campbell C.S."/>
            <person name="Campbell M.L."/>
            <person name="Chen J."/>
            <person name="Chertkov O."/>
            <person name="Cleland C."/>
            <person name="Dimitrijevic M."/>
            <person name="Doggett N.A."/>
            <person name="Fawcett J.J."/>
            <person name="Glavina T."/>
            <person name="Goodwin L.A."/>
            <person name="Hill K.K."/>
            <person name="Hitchcock P."/>
            <person name="Jackson P.J."/>
            <person name="Keim P."/>
            <person name="Kewalramani A.R."/>
            <person name="Longmire J."/>
            <person name="Lucas S."/>
            <person name="Malfatti S."/>
            <person name="McMurry K."/>
            <person name="Meincke L.J."/>
            <person name="Misra M."/>
            <person name="Moseman B.L."/>
            <person name="Mundt M."/>
            <person name="Munk A.C."/>
            <person name="Okinaka R.T."/>
            <person name="Parson-Quintana B."/>
            <person name="Reilly L.P."/>
            <person name="Richardson P."/>
            <person name="Robinson D.L."/>
            <person name="Rubin E."/>
            <person name="Saunders E."/>
            <person name="Tapia R."/>
            <person name="Tesmer J.G."/>
            <person name="Thayer N."/>
            <person name="Thompson L.S."/>
            <person name="Tice H."/>
            <person name="Ticknor L.O."/>
            <person name="Wills P.L."/>
            <person name="Brettin T.S."/>
            <person name="Gilna P."/>
        </authorList>
    </citation>
    <scope>NUCLEOTIDE SEQUENCE [LARGE SCALE GENOMIC DNA]</scope>
    <source>
        <strain>97-27</strain>
    </source>
</reference>